<reference key="1">
    <citation type="journal article" date="1988" name="Nucleic Acids Res.">
        <title>Analysis of cDNA encoding the hypoxanthine-guanine phosphoribosyltransferase (HGPRTase) of Schistosoma mansoni; a putative target for chemotherapy.</title>
        <authorList>
            <person name="Craig S.P."/>
            <person name="McKerrow J.H."/>
            <person name="Newport G.N."/>
            <person name="Wang C.C."/>
        </authorList>
    </citation>
    <scope>NUCLEOTIDE SEQUENCE [MRNA]</scope>
    <source>
        <strain>Puerto Rican</strain>
    </source>
</reference>
<reference key="2">
    <citation type="journal article" date="1989" name="Nucleic Acids Res.">
        <title>Evidence for a class of very small introns in the gene for hypoxanthine-guanine phosphoribosyltransferase in Schistosoma mansoni.</title>
        <authorList>
            <person name="Craig S.P."/>
            <person name="Muralidhar M.G."/>
            <person name="McKerrow J.H."/>
            <person name="Wang C.C."/>
        </authorList>
    </citation>
    <scope>NUCLEOTIDE SEQUENCE [GENOMIC DNA]</scope>
    <source>
        <strain>Puerto Rican</strain>
    </source>
</reference>
<sequence>MLTSLITSSTTVTLTLSQIYYILDIACGFLISVLVWMNSSVLDNGNHSNPQIRDMSSNMIKADCVVIEDSFRGFPTEYFCTSPRYDECLDYVLIPNGMIKDRLEKMSMDIVDYYEACNATSITLMCVLKGGFKFLADLVDGLERTVRARGIVLPMSVEFVRVKSYVNDVSIHEPILTGLGDPSEYKDKNVLVVEDIIDTGKTITKLISHLDSLSTKSVKVASLLVKRTSPRNDYRPDVGFEVPNRFVVGYALDYNDNFRDLHHICVINEVGQKKFSVPCTSKPV</sequence>
<gene>
    <name type="primary">HGPRT</name>
</gene>
<accession>P09383</accession>
<feature type="chain" id="PRO_0000139594" description="Hypoxanthine-guanine phosphoribosyltransferase">
    <location>
        <begin position="1"/>
        <end position="284"/>
    </location>
</feature>
<feature type="active site" description="Proton acceptor" evidence="1">
    <location>
        <position position="198"/>
    </location>
</feature>
<feature type="binding site" evidence="1">
    <location>
        <position position="129"/>
    </location>
    <ligand>
        <name>GMP</name>
        <dbReference type="ChEBI" id="CHEBI:58115"/>
    </ligand>
</feature>
<feature type="binding site" evidence="1">
    <location>
        <begin position="194"/>
        <end position="202"/>
    </location>
    <ligand>
        <name>GMP</name>
        <dbReference type="ChEBI" id="CHEBI:58115"/>
    </ligand>
</feature>
<feature type="binding site" evidence="1">
    <location>
        <position position="226"/>
    </location>
    <ligand>
        <name>GMP</name>
        <dbReference type="ChEBI" id="CHEBI:58115"/>
    </ligand>
</feature>
<feature type="binding site" evidence="1">
    <location>
        <position position="253"/>
    </location>
    <ligand>
        <name>GMP</name>
        <dbReference type="ChEBI" id="CHEBI:58115"/>
    </ligand>
</feature>
<feature type="binding site" evidence="1">
    <location>
        <position position="253"/>
    </location>
    <ligand>
        <name>Mg(2+)</name>
        <dbReference type="ChEBI" id="CHEBI:18420"/>
    </ligand>
</feature>
<feature type="strand" evidence="3">
    <location>
        <begin position="64"/>
        <end position="66"/>
    </location>
</feature>
<feature type="helix" evidence="3">
    <location>
        <begin position="76"/>
        <end position="78"/>
    </location>
</feature>
<feature type="helix" evidence="3">
    <location>
        <begin position="83"/>
        <end position="85"/>
    </location>
</feature>
<feature type="turn" evidence="3">
    <location>
        <begin position="86"/>
        <end position="88"/>
    </location>
</feature>
<feature type="strand" evidence="3">
    <location>
        <begin position="89"/>
        <end position="94"/>
    </location>
</feature>
<feature type="helix" evidence="3">
    <location>
        <begin position="96"/>
        <end position="116"/>
    </location>
</feature>
<feature type="strand" evidence="3">
    <location>
        <begin position="122"/>
        <end position="127"/>
    </location>
</feature>
<feature type="turn" evidence="3">
    <location>
        <begin position="128"/>
        <end position="131"/>
    </location>
</feature>
<feature type="helix" evidence="3">
    <location>
        <begin position="132"/>
        <end position="147"/>
    </location>
</feature>
<feature type="turn" evidence="3">
    <location>
        <begin position="148"/>
        <end position="150"/>
    </location>
</feature>
<feature type="strand" evidence="3">
    <location>
        <begin position="155"/>
        <end position="160"/>
    </location>
</feature>
<feature type="strand" evidence="3">
    <location>
        <begin position="188"/>
        <end position="200"/>
    </location>
</feature>
<feature type="helix" evidence="3">
    <location>
        <begin position="201"/>
        <end position="210"/>
    </location>
</feature>
<feature type="strand" evidence="3">
    <location>
        <begin position="216"/>
        <end position="226"/>
    </location>
</feature>
<feature type="strand" evidence="3">
    <location>
        <begin position="237"/>
        <end position="242"/>
    </location>
</feature>
<feature type="strand" evidence="3">
    <location>
        <begin position="247"/>
        <end position="249"/>
    </location>
</feature>
<feature type="strand" evidence="3">
    <location>
        <begin position="262"/>
        <end position="267"/>
    </location>
</feature>
<feature type="helix" evidence="3">
    <location>
        <begin position="269"/>
        <end position="274"/>
    </location>
</feature>
<proteinExistence type="evidence at protein level"/>
<protein>
    <recommendedName>
        <fullName>Hypoxanthine-guanine phosphoribosyltransferase</fullName>
        <shortName>HGPRT</shortName>
        <shortName>HGPRTase</shortName>
        <ecNumber>2.4.2.8</ecNumber>
    </recommendedName>
</protein>
<organism>
    <name type="scientific">Schistosoma mansoni</name>
    <name type="common">Blood fluke</name>
    <dbReference type="NCBI Taxonomy" id="6183"/>
    <lineage>
        <taxon>Eukaryota</taxon>
        <taxon>Metazoa</taxon>
        <taxon>Spiralia</taxon>
        <taxon>Lophotrochozoa</taxon>
        <taxon>Platyhelminthes</taxon>
        <taxon>Trematoda</taxon>
        <taxon>Digenea</taxon>
        <taxon>Strigeidida</taxon>
        <taxon>Schistosomatoidea</taxon>
        <taxon>Schistosomatidae</taxon>
        <taxon>Schistosoma</taxon>
    </lineage>
</organism>
<comment type="function">
    <text evidence="1">Converts guanine to guanosine monophosphate, and hypoxanthine to inosine monophosphate. Transfers the 5-phosphoribosyl group from 5-phosphoribosylpyrophosphate onto the purine. Plays a central role in the generation of purine nucleotides through the purine salvage pathway (By similarity).</text>
</comment>
<comment type="catalytic activity">
    <reaction>
        <text>IMP + diphosphate = hypoxanthine + 5-phospho-alpha-D-ribose 1-diphosphate</text>
        <dbReference type="Rhea" id="RHEA:17973"/>
        <dbReference type="ChEBI" id="CHEBI:17368"/>
        <dbReference type="ChEBI" id="CHEBI:33019"/>
        <dbReference type="ChEBI" id="CHEBI:58017"/>
        <dbReference type="ChEBI" id="CHEBI:58053"/>
        <dbReference type="EC" id="2.4.2.8"/>
    </reaction>
</comment>
<comment type="catalytic activity">
    <reaction>
        <text>GMP + diphosphate = guanine + 5-phospho-alpha-D-ribose 1-diphosphate</text>
        <dbReference type="Rhea" id="RHEA:25424"/>
        <dbReference type="ChEBI" id="CHEBI:16235"/>
        <dbReference type="ChEBI" id="CHEBI:33019"/>
        <dbReference type="ChEBI" id="CHEBI:58017"/>
        <dbReference type="ChEBI" id="CHEBI:58115"/>
        <dbReference type="EC" id="2.4.2.8"/>
    </reaction>
</comment>
<comment type="cofactor">
    <cofactor evidence="1">
        <name>Mg(2+)</name>
        <dbReference type="ChEBI" id="CHEBI:18420"/>
    </cofactor>
    <text evidence="1">Binds 2 magnesium ions per subunit. The magnesium ions are essentially bound to the substrate and have few direct interactions with the protein.</text>
</comment>
<comment type="pathway">
    <text>Purine metabolism; IMP biosynthesis via salvage pathway; IMP from hypoxanthine: step 1/1.</text>
</comment>
<comment type="subunit">
    <text evidence="1">Homotetramer.</text>
</comment>
<comment type="subcellular location">
    <subcellularLocation>
        <location>Cytoplasm</location>
    </subcellularLocation>
</comment>
<comment type="similarity">
    <text evidence="2">Belongs to the purine/pyrimidine phosphoribosyltransferase family.</text>
</comment>
<keyword id="KW-0002">3D-structure</keyword>
<keyword id="KW-0963">Cytoplasm</keyword>
<keyword id="KW-0328">Glycosyltransferase</keyword>
<keyword id="KW-0460">Magnesium</keyword>
<keyword id="KW-0479">Metal-binding</keyword>
<keyword id="KW-0547">Nucleotide-binding</keyword>
<keyword id="KW-0660">Purine salvage</keyword>
<keyword id="KW-1185">Reference proteome</keyword>
<keyword id="KW-0808">Transferase</keyword>
<evidence type="ECO:0000250" key="1"/>
<evidence type="ECO:0000305" key="2"/>
<evidence type="ECO:0007829" key="3">
    <source>
        <dbReference type="PDB" id="5IPF"/>
    </source>
</evidence>
<dbReference type="EC" id="2.4.2.8"/>
<dbReference type="EMBL" id="X07883">
    <property type="protein sequence ID" value="CAA30730.1"/>
    <property type="status" value="ALT_SEQ"/>
    <property type="molecule type" value="mRNA"/>
</dbReference>
<dbReference type="EMBL" id="X13531">
    <property type="protein sequence ID" value="CAA31885.1"/>
    <property type="molecule type" value="Genomic_DNA"/>
</dbReference>
<dbReference type="EMBL" id="X13532">
    <property type="protein sequence ID" value="CAA31885.1"/>
    <property type="status" value="JOINED"/>
    <property type="molecule type" value="Genomic_DNA"/>
</dbReference>
<dbReference type="EMBL" id="X13533">
    <property type="protein sequence ID" value="CAA31885.1"/>
    <property type="status" value="JOINED"/>
    <property type="molecule type" value="Genomic_DNA"/>
</dbReference>
<dbReference type="EMBL" id="X13534">
    <property type="protein sequence ID" value="CAA31885.1"/>
    <property type="status" value="JOINED"/>
    <property type="molecule type" value="Genomic_DNA"/>
</dbReference>
<dbReference type="PIR" id="S04278">
    <property type="entry name" value="S04278"/>
</dbReference>
<dbReference type="PIR" id="S09614">
    <property type="entry name" value="S09614"/>
</dbReference>
<dbReference type="PDB" id="5IPF">
    <property type="method" value="X-ray"/>
    <property type="resolution" value="2.80 A"/>
    <property type="chains" value="A/B/C/D=55-284"/>
</dbReference>
<dbReference type="PDBsum" id="5IPF"/>
<dbReference type="SMR" id="P09383"/>
<dbReference type="STRING" id="6183.P09383"/>
<dbReference type="eggNOG" id="KOG3367">
    <property type="taxonomic scope" value="Eukaryota"/>
</dbReference>
<dbReference type="HOGENOM" id="CLU_073615_3_0_1"/>
<dbReference type="InParanoid" id="P09383"/>
<dbReference type="BRENDA" id="2.4.2.8">
    <property type="organism ID" value="5608"/>
</dbReference>
<dbReference type="UniPathway" id="UPA00591">
    <property type="reaction ID" value="UER00648"/>
</dbReference>
<dbReference type="Proteomes" id="UP000008854">
    <property type="component" value="Unassembled WGS sequence"/>
</dbReference>
<dbReference type="GO" id="GO:0005829">
    <property type="term" value="C:cytosol"/>
    <property type="evidence" value="ECO:0007669"/>
    <property type="project" value="TreeGrafter"/>
</dbReference>
<dbReference type="GO" id="GO:0052657">
    <property type="term" value="F:guanine phosphoribosyltransferase activity"/>
    <property type="evidence" value="ECO:0007669"/>
    <property type="project" value="RHEA"/>
</dbReference>
<dbReference type="GO" id="GO:0004422">
    <property type="term" value="F:hypoxanthine phosphoribosyltransferase activity"/>
    <property type="evidence" value="ECO:0007669"/>
    <property type="project" value="InterPro"/>
</dbReference>
<dbReference type="GO" id="GO:0000287">
    <property type="term" value="F:magnesium ion binding"/>
    <property type="evidence" value="ECO:0007669"/>
    <property type="project" value="TreeGrafter"/>
</dbReference>
<dbReference type="GO" id="GO:0000166">
    <property type="term" value="F:nucleotide binding"/>
    <property type="evidence" value="ECO:0007669"/>
    <property type="project" value="UniProtKB-KW"/>
</dbReference>
<dbReference type="GO" id="GO:0032263">
    <property type="term" value="P:GMP salvage"/>
    <property type="evidence" value="ECO:0007669"/>
    <property type="project" value="TreeGrafter"/>
</dbReference>
<dbReference type="GO" id="GO:0006178">
    <property type="term" value="P:guanine salvage"/>
    <property type="evidence" value="ECO:0007669"/>
    <property type="project" value="TreeGrafter"/>
</dbReference>
<dbReference type="GO" id="GO:0046100">
    <property type="term" value="P:hypoxanthine metabolic process"/>
    <property type="evidence" value="ECO:0007669"/>
    <property type="project" value="TreeGrafter"/>
</dbReference>
<dbReference type="GO" id="GO:0032264">
    <property type="term" value="P:IMP salvage"/>
    <property type="evidence" value="ECO:0007669"/>
    <property type="project" value="UniProtKB-UniPathway"/>
</dbReference>
<dbReference type="GO" id="GO:0006166">
    <property type="term" value="P:purine ribonucleoside salvage"/>
    <property type="evidence" value="ECO:0007669"/>
    <property type="project" value="UniProtKB-KW"/>
</dbReference>
<dbReference type="CDD" id="cd06223">
    <property type="entry name" value="PRTases_typeI"/>
    <property type="match status" value="1"/>
</dbReference>
<dbReference type="FunFam" id="3.40.50.2020:FF:000053">
    <property type="entry name" value="Hypoxanthine phosphoribosyltransferase"/>
    <property type="match status" value="1"/>
</dbReference>
<dbReference type="Gene3D" id="3.40.50.2020">
    <property type="match status" value="1"/>
</dbReference>
<dbReference type="InterPro" id="IPR050408">
    <property type="entry name" value="HGPRT"/>
</dbReference>
<dbReference type="InterPro" id="IPR005904">
    <property type="entry name" value="Hxn_phspho_trans"/>
</dbReference>
<dbReference type="InterPro" id="IPR000836">
    <property type="entry name" value="PRibTrfase_dom"/>
</dbReference>
<dbReference type="InterPro" id="IPR029057">
    <property type="entry name" value="PRTase-like"/>
</dbReference>
<dbReference type="NCBIfam" id="TIGR01203">
    <property type="entry name" value="HGPRTase"/>
    <property type="match status" value="1"/>
</dbReference>
<dbReference type="PANTHER" id="PTHR43340:SF1">
    <property type="entry name" value="HYPOXANTHINE PHOSPHORIBOSYLTRANSFERASE"/>
    <property type="match status" value="1"/>
</dbReference>
<dbReference type="PANTHER" id="PTHR43340">
    <property type="entry name" value="HYPOXANTHINE-GUANINE PHOSPHORIBOSYLTRANSFERASE"/>
    <property type="match status" value="1"/>
</dbReference>
<dbReference type="Pfam" id="PF00156">
    <property type="entry name" value="Pribosyltran"/>
    <property type="match status" value="1"/>
</dbReference>
<dbReference type="SUPFAM" id="SSF53271">
    <property type="entry name" value="PRTase-like"/>
    <property type="match status" value="1"/>
</dbReference>
<dbReference type="PROSITE" id="PS00103">
    <property type="entry name" value="PUR_PYR_PR_TRANSFER"/>
    <property type="match status" value="1"/>
</dbReference>
<name>HPRT_SCHMA</name>